<comment type="function">
    <text evidence="1">Binds the 23S rRNA.</text>
</comment>
<comment type="cofactor">
    <cofactor evidence="1">
        <name>Zn(2+)</name>
        <dbReference type="ChEBI" id="CHEBI:29105"/>
    </cofactor>
    <text evidence="1">Binds 1 zinc ion per subunit.</text>
</comment>
<comment type="subunit">
    <text evidence="1">Part of the 50S ribosomal subunit.</text>
</comment>
<comment type="similarity">
    <text evidence="1">Belongs to the bacterial ribosomal protein bL31 family. Type A subfamily.</text>
</comment>
<organism>
    <name type="scientific">Campylobacter jejuni subsp. jejuni serotype O:2 (strain ATCC 700819 / NCTC 11168)</name>
    <dbReference type="NCBI Taxonomy" id="192222"/>
    <lineage>
        <taxon>Bacteria</taxon>
        <taxon>Pseudomonadati</taxon>
        <taxon>Campylobacterota</taxon>
        <taxon>Epsilonproteobacteria</taxon>
        <taxon>Campylobacterales</taxon>
        <taxon>Campylobacteraceae</taxon>
        <taxon>Campylobacter</taxon>
    </lineage>
</organism>
<proteinExistence type="inferred from homology"/>
<sequence length="66" mass="7477">MKKEIHPEYVECKVSCACGNTFTTKSNKAELRVDICSNCHPFFTGSEKIVDAAGRVEKFKKKYAMQ</sequence>
<protein>
    <recommendedName>
        <fullName evidence="1">Large ribosomal subunit protein bL31</fullName>
    </recommendedName>
    <alternativeName>
        <fullName evidence="2">50S ribosomal protein L31</fullName>
    </alternativeName>
</protein>
<keyword id="KW-0479">Metal-binding</keyword>
<keyword id="KW-1185">Reference proteome</keyword>
<keyword id="KW-0687">Ribonucleoprotein</keyword>
<keyword id="KW-0689">Ribosomal protein</keyword>
<keyword id="KW-0694">RNA-binding</keyword>
<keyword id="KW-0699">rRNA-binding</keyword>
<keyword id="KW-0862">Zinc</keyword>
<dbReference type="EMBL" id="AL111168">
    <property type="protein sequence ID" value="CAL34326.1"/>
    <property type="molecule type" value="Genomic_DNA"/>
</dbReference>
<dbReference type="PIR" id="C81433">
    <property type="entry name" value="C81433"/>
</dbReference>
<dbReference type="RefSeq" id="WP_002851603.1">
    <property type="nucleotide sequence ID" value="NZ_SZUC01000006.1"/>
</dbReference>
<dbReference type="RefSeq" id="YP_002343615.1">
    <property type="nucleotide sequence ID" value="NC_002163.1"/>
</dbReference>
<dbReference type="SMR" id="Q9PIX2"/>
<dbReference type="IntAct" id="Q9PIX2">
    <property type="interactions" value="8"/>
</dbReference>
<dbReference type="STRING" id="192222.Cj0155c"/>
<dbReference type="PaxDb" id="192222-Cj0155c"/>
<dbReference type="EnsemblBacteria" id="CAL34326">
    <property type="protein sequence ID" value="CAL34326"/>
    <property type="gene ID" value="Cj0155c"/>
</dbReference>
<dbReference type="GeneID" id="904488"/>
<dbReference type="KEGG" id="cje:Cj0155c"/>
<dbReference type="PATRIC" id="fig|192222.6.peg.153"/>
<dbReference type="eggNOG" id="COG0254">
    <property type="taxonomic scope" value="Bacteria"/>
</dbReference>
<dbReference type="HOGENOM" id="CLU_114306_4_3_7"/>
<dbReference type="OrthoDB" id="9803251at2"/>
<dbReference type="Proteomes" id="UP000000799">
    <property type="component" value="Chromosome"/>
</dbReference>
<dbReference type="GO" id="GO:1990904">
    <property type="term" value="C:ribonucleoprotein complex"/>
    <property type="evidence" value="ECO:0007669"/>
    <property type="project" value="UniProtKB-KW"/>
</dbReference>
<dbReference type="GO" id="GO:0005840">
    <property type="term" value="C:ribosome"/>
    <property type="evidence" value="ECO:0007669"/>
    <property type="project" value="UniProtKB-KW"/>
</dbReference>
<dbReference type="GO" id="GO:0046872">
    <property type="term" value="F:metal ion binding"/>
    <property type="evidence" value="ECO:0007669"/>
    <property type="project" value="UniProtKB-KW"/>
</dbReference>
<dbReference type="GO" id="GO:0019843">
    <property type="term" value="F:rRNA binding"/>
    <property type="evidence" value="ECO:0007669"/>
    <property type="project" value="UniProtKB-KW"/>
</dbReference>
<dbReference type="GO" id="GO:0003735">
    <property type="term" value="F:structural constituent of ribosome"/>
    <property type="evidence" value="ECO:0007669"/>
    <property type="project" value="InterPro"/>
</dbReference>
<dbReference type="GO" id="GO:0006412">
    <property type="term" value="P:translation"/>
    <property type="evidence" value="ECO:0007669"/>
    <property type="project" value="UniProtKB-UniRule"/>
</dbReference>
<dbReference type="Gene3D" id="4.10.830.30">
    <property type="entry name" value="Ribosomal protein L31"/>
    <property type="match status" value="1"/>
</dbReference>
<dbReference type="HAMAP" id="MF_00501">
    <property type="entry name" value="Ribosomal_bL31_1"/>
    <property type="match status" value="1"/>
</dbReference>
<dbReference type="InterPro" id="IPR034704">
    <property type="entry name" value="Ribosomal_bL28/bL31-like_sf"/>
</dbReference>
<dbReference type="InterPro" id="IPR002150">
    <property type="entry name" value="Ribosomal_bL31"/>
</dbReference>
<dbReference type="InterPro" id="IPR027491">
    <property type="entry name" value="Ribosomal_bL31_A"/>
</dbReference>
<dbReference type="InterPro" id="IPR042105">
    <property type="entry name" value="Ribosomal_bL31_sf"/>
</dbReference>
<dbReference type="NCBIfam" id="TIGR00105">
    <property type="entry name" value="L31"/>
    <property type="match status" value="1"/>
</dbReference>
<dbReference type="NCBIfam" id="NF000612">
    <property type="entry name" value="PRK00019.1"/>
    <property type="match status" value="1"/>
</dbReference>
<dbReference type="NCBIfam" id="NF001809">
    <property type="entry name" value="PRK00528.1"/>
    <property type="match status" value="1"/>
</dbReference>
<dbReference type="PANTHER" id="PTHR33280">
    <property type="entry name" value="50S RIBOSOMAL PROTEIN L31, CHLOROPLASTIC"/>
    <property type="match status" value="1"/>
</dbReference>
<dbReference type="PANTHER" id="PTHR33280:SF1">
    <property type="entry name" value="LARGE RIBOSOMAL SUBUNIT PROTEIN BL31C"/>
    <property type="match status" value="1"/>
</dbReference>
<dbReference type="Pfam" id="PF01197">
    <property type="entry name" value="Ribosomal_L31"/>
    <property type="match status" value="1"/>
</dbReference>
<dbReference type="PRINTS" id="PR01249">
    <property type="entry name" value="RIBOSOMALL31"/>
</dbReference>
<dbReference type="SUPFAM" id="SSF143800">
    <property type="entry name" value="L28p-like"/>
    <property type="match status" value="1"/>
</dbReference>
<dbReference type="PROSITE" id="PS01143">
    <property type="entry name" value="RIBOSOMAL_L31"/>
    <property type="match status" value="1"/>
</dbReference>
<feature type="chain" id="PRO_0000173090" description="Large ribosomal subunit protein bL31">
    <location>
        <begin position="1"/>
        <end position="66"/>
    </location>
</feature>
<feature type="binding site" evidence="1">
    <location>
        <position position="16"/>
    </location>
    <ligand>
        <name>Zn(2+)</name>
        <dbReference type="ChEBI" id="CHEBI:29105"/>
    </ligand>
</feature>
<feature type="binding site" evidence="1">
    <location>
        <position position="18"/>
    </location>
    <ligand>
        <name>Zn(2+)</name>
        <dbReference type="ChEBI" id="CHEBI:29105"/>
    </ligand>
</feature>
<feature type="binding site" evidence="1">
    <location>
        <position position="36"/>
    </location>
    <ligand>
        <name>Zn(2+)</name>
        <dbReference type="ChEBI" id="CHEBI:29105"/>
    </ligand>
</feature>
<feature type="binding site" evidence="1">
    <location>
        <position position="39"/>
    </location>
    <ligand>
        <name>Zn(2+)</name>
        <dbReference type="ChEBI" id="CHEBI:29105"/>
    </ligand>
</feature>
<accession>Q9PIX2</accession>
<accession>Q0PBY2</accession>
<name>RL31_CAMJE</name>
<reference key="1">
    <citation type="journal article" date="2000" name="Nature">
        <title>The genome sequence of the food-borne pathogen Campylobacter jejuni reveals hypervariable sequences.</title>
        <authorList>
            <person name="Parkhill J."/>
            <person name="Wren B.W."/>
            <person name="Mungall K.L."/>
            <person name="Ketley J.M."/>
            <person name="Churcher C.M."/>
            <person name="Basham D."/>
            <person name="Chillingworth T."/>
            <person name="Davies R.M."/>
            <person name="Feltwell T."/>
            <person name="Holroyd S."/>
            <person name="Jagels K."/>
            <person name="Karlyshev A.V."/>
            <person name="Moule S."/>
            <person name="Pallen M.J."/>
            <person name="Penn C.W."/>
            <person name="Quail M.A."/>
            <person name="Rajandream M.A."/>
            <person name="Rutherford K.M."/>
            <person name="van Vliet A.H.M."/>
            <person name="Whitehead S."/>
            <person name="Barrell B.G."/>
        </authorList>
    </citation>
    <scope>NUCLEOTIDE SEQUENCE [LARGE SCALE GENOMIC DNA]</scope>
    <source>
        <strain>ATCC 700819 / NCTC 11168</strain>
    </source>
</reference>
<gene>
    <name evidence="1" type="primary">rpmE</name>
    <name type="ordered locus">Cj0155c</name>
</gene>
<evidence type="ECO:0000255" key="1">
    <source>
        <dbReference type="HAMAP-Rule" id="MF_00501"/>
    </source>
</evidence>
<evidence type="ECO:0000305" key="2"/>